<name>ATPA_TRICV</name>
<evidence type="ECO:0000255" key="1">
    <source>
        <dbReference type="HAMAP-Rule" id="MF_01346"/>
    </source>
</evidence>
<dbReference type="EC" id="7.1.2.2" evidence="1"/>
<dbReference type="EMBL" id="X60752">
    <property type="protein sequence ID" value="CAA43157.1"/>
    <property type="molecule type" value="Genomic_DNA"/>
</dbReference>
<dbReference type="EMBL" id="Z67753">
    <property type="protein sequence ID" value="CAA91694.1"/>
    <property type="molecule type" value="Genomic_DNA"/>
</dbReference>
<dbReference type="EMBL" id="X57701">
    <property type="status" value="NOT_ANNOTATED_CDS"/>
    <property type="molecule type" value="Genomic_DNA"/>
</dbReference>
<dbReference type="PIR" id="S78321">
    <property type="entry name" value="S78321"/>
</dbReference>
<dbReference type="RefSeq" id="NP_043662.1">
    <property type="nucleotide sequence ID" value="NC_001713.1"/>
</dbReference>
<dbReference type="SMR" id="Q00820"/>
<dbReference type="GeneID" id="801700"/>
<dbReference type="GO" id="GO:0009535">
    <property type="term" value="C:chloroplast thylakoid membrane"/>
    <property type="evidence" value="ECO:0007669"/>
    <property type="project" value="UniProtKB-SubCell"/>
</dbReference>
<dbReference type="GO" id="GO:0045259">
    <property type="term" value="C:proton-transporting ATP synthase complex"/>
    <property type="evidence" value="ECO:0007669"/>
    <property type="project" value="UniProtKB-KW"/>
</dbReference>
<dbReference type="GO" id="GO:0043531">
    <property type="term" value="F:ADP binding"/>
    <property type="evidence" value="ECO:0007669"/>
    <property type="project" value="TreeGrafter"/>
</dbReference>
<dbReference type="GO" id="GO:0005524">
    <property type="term" value="F:ATP binding"/>
    <property type="evidence" value="ECO:0007669"/>
    <property type="project" value="UniProtKB-UniRule"/>
</dbReference>
<dbReference type="GO" id="GO:0046933">
    <property type="term" value="F:proton-transporting ATP synthase activity, rotational mechanism"/>
    <property type="evidence" value="ECO:0007669"/>
    <property type="project" value="UniProtKB-UniRule"/>
</dbReference>
<dbReference type="CDD" id="cd18113">
    <property type="entry name" value="ATP-synt_F1_alpha_C"/>
    <property type="match status" value="1"/>
</dbReference>
<dbReference type="CDD" id="cd18116">
    <property type="entry name" value="ATP-synt_F1_alpha_N"/>
    <property type="match status" value="1"/>
</dbReference>
<dbReference type="CDD" id="cd01132">
    <property type="entry name" value="F1-ATPase_alpha_CD"/>
    <property type="match status" value="1"/>
</dbReference>
<dbReference type="FunFam" id="1.20.150.20:FF:000001">
    <property type="entry name" value="ATP synthase subunit alpha"/>
    <property type="match status" value="1"/>
</dbReference>
<dbReference type="FunFam" id="2.40.30.20:FF:000001">
    <property type="entry name" value="ATP synthase subunit alpha"/>
    <property type="match status" value="1"/>
</dbReference>
<dbReference type="FunFam" id="3.40.50.300:FF:000002">
    <property type="entry name" value="ATP synthase subunit alpha"/>
    <property type="match status" value="1"/>
</dbReference>
<dbReference type="Gene3D" id="2.40.30.20">
    <property type="match status" value="1"/>
</dbReference>
<dbReference type="Gene3D" id="1.20.150.20">
    <property type="entry name" value="ATP synthase alpha/beta chain, C-terminal domain"/>
    <property type="match status" value="1"/>
</dbReference>
<dbReference type="Gene3D" id="3.40.50.300">
    <property type="entry name" value="P-loop containing nucleotide triphosphate hydrolases"/>
    <property type="match status" value="1"/>
</dbReference>
<dbReference type="HAMAP" id="MF_01346">
    <property type="entry name" value="ATP_synth_alpha_bact"/>
    <property type="match status" value="1"/>
</dbReference>
<dbReference type="InterPro" id="IPR023366">
    <property type="entry name" value="ATP_synth_asu-like_sf"/>
</dbReference>
<dbReference type="InterPro" id="IPR000793">
    <property type="entry name" value="ATP_synth_asu_C"/>
</dbReference>
<dbReference type="InterPro" id="IPR038376">
    <property type="entry name" value="ATP_synth_asu_C_sf"/>
</dbReference>
<dbReference type="InterPro" id="IPR033732">
    <property type="entry name" value="ATP_synth_F1_a_nt-bd_dom"/>
</dbReference>
<dbReference type="InterPro" id="IPR005294">
    <property type="entry name" value="ATP_synth_F1_asu"/>
</dbReference>
<dbReference type="InterPro" id="IPR020003">
    <property type="entry name" value="ATPase_a/bsu_AS"/>
</dbReference>
<dbReference type="InterPro" id="IPR004100">
    <property type="entry name" value="ATPase_F1/V1/A1_a/bsu_N"/>
</dbReference>
<dbReference type="InterPro" id="IPR036121">
    <property type="entry name" value="ATPase_F1/V1/A1_a/bsu_N_sf"/>
</dbReference>
<dbReference type="InterPro" id="IPR000194">
    <property type="entry name" value="ATPase_F1/V1/A1_a/bsu_nucl-bd"/>
</dbReference>
<dbReference type="InterPro" id="IPR027417">
    <property type="entry name" value="P-loop_NTPase"/>
</dbReference>
<dbReference type="NCBIfam" id="TIGR00962">
    <property type="entry name" value="atpA"/>
    <property type="match status" value="1"/>
</dbReference>
<dbReference type="NCBIfam" id="NF009884">
    <property type="entry name" value="PRK13343.1"/>
    <property type="match status" value="1"/>
</dbReference>
<dbReference type="PANTHER" id="PTHR48082">
    <property type="entry name" value="ATP SYNTHASE SUBUNIT ALPHA, MITOCHONDRIAL"/>
    <property type="match status" value="1"/>
</dbReference>
<dbReference type="PANTHER" id="PTHR48082:SF2">
    <property type="entry name" value="ATP SYNTHASE SUBUNIT ALPHA, MITOCHONDRIAL"/>
    <property type="match status" value="1"/>
</dbReference>
<dbReference type="Pfam" id="PF00006">
    <property type="entry name" value="ATP-synt_ab"/>
    <property type="match status" value="1"/>
</dbReference>
<dbReference type="Pfam" id="PF00306">
    <property type="entry name" value="ATP-synt_ab_C"/>
    <property type="match status" value="1"/>
</dbReference>
<dbReference type="Pfam" id="PF02874">
    <property type="entry name" value="ATP-synt_ab_N"/>
    <property type="match status" value="1"/>
</dbReference>
<dbReference type="PIRSF" id="PIRSF039088">
    <property type="entry name" value="F_ATPase_subunit_alpha"/>
    <property type="match status" value="1"/>
</dbReference>
<dbReference type="SUPFAM" id="SSF47917">
    <property type="entry name" value="C-terminal domain of alpha and beta subunits of F1 ATP synthase"/>
    <property type="match status" value="1"/>
</dbReference>
<dbReference type="SUPFAM" id="SSF50615">
    <property type="entry name" value="N-terminal domain of alpha and beta subunits of F1 ATP synthase"/>
    <property type="match status" value="1"/>
</dbReference>
<dbReference type="SUPFAM" id="SSF52540">
    <property type="entry name" value="P-loop containing nucleoside triphosphate hydrolases"/>
    <property type="match status" value="1"/>
</dbReference>
<dbReference type="PROSITE" id="PS00152">
    <property type="entry name" value="ATPASE_ALPHA_BETA"/>
    <property type="match status" value="1"/>
</dbReference>
<organism>
    <name type="scientific">Trieres chinensis</name>
    <name type="common">Marine centric diatom</name>
    <name type="synonym">Odontella sinensis</name>
    <dbReference type="NCBI Taxonomy" id="1514140"/>
    <lineage>
        <taxon>Eukaryota</taxon>
        <taxon>Sar</taxon>
        <taxon>Stramenopiles</taxon>
        <taxon>Ochrophyta</taxon>
        <taxon>Bacillariophyta</taxon>
        <taxon>Mediophyceae</taxon>
        <taxon>Biddulphiophycidae</taxon>
        <taxon>Eupodiscales</taxon>
        <taxon>Parodontellaceae</taxon>
        <taxon>Trieres</taxon>
    </lineage>
</organism>
<sequence>MINIRPDEISSIIREQIEQYDQDVKVDNIGTVLQVGDGIARVYGLDQVMSGELLEFEDKTIGIALNLENDNVGVVLMGNGRQILEGSTVKTTGQIAQIPTGEAFLGRVVNPLGAPIDGKGDIANTETRLLEAMAPGIISRKSVCEPLQTGITSIDAMIPIGRGQRELIIGDRQTGKTAIAVDTIINQKTEDVVCVYVGVGQKASTVAQVVNVLEEKEAMAYTIIVCASANDPATLQYIAPYAGAALAEYFMYNGKATLVIYDDLTKQAMAYRQMSLLLRRPPGREAYPGDVFYLHSRLLERAAKLSDALGGGSMTALPVIETQASDVSAYIPTNVISITDGQIFLSNDLFNSGIRPAINVGISVSRVGSAAQTKAMKQVAGKLKLELAQFAELEAFSQFASDLDEATQKQLARGTRLREVLKQPQNSPLSVAEQVALIYTGINGFLDELEVASVKKYCASLLSFLNTSNNSYIGIVSSTNQFTAEAETALKEAISESKAVFMK</sequence>
<gene>
    <name evidence="1" type="primary">atpA</name>
</gene>
<feature type="chain" id="PRO_0000144387" description="ATP synthase subunit alpha, chloroplastic">
    <location>
        <begin position="1"/>
        <end position="503"/>
    </location>
</feature>
<feature type="binding site" evidence="1">
    <location>
        <begin position="170"/>
        <end position="177"/>
    </location>
    <ligand>
        <name>ATP</name>
        <dbReference type="ChEBI" id="CHEBI:30616"/>
    </ligand>
</feature>
<feature type="site" description="Required for activity" evidence="1">
    <location>
        <position position="363"/>
    </location>
</feature>
<keyword id="KW-0066">ATP synthesis</keyword>
<keyword id="KW-0067">ATP-binding</keyword>
<keyword id="KW-0139">CF(1)</keyword>
<keyword id="KW-0150">Chloroplast</keyword>
<keyword id="KW-0375">Hydrogen ion transport</keyword>
<keyword id="KW-0406">Ion transport</keyword>
<keyword id="KW-0472">Membrane</keyword>
<keyword id="KW-0547">Nucleotide-binding</keyword>
<keyword id="KW-0934">Plastid</keyword>
<keyword id="KW-0793">Thylakoid</keyword>
<keyword id="KW-1278">Translocase</keyword>
<keyword id="KW-0813">Transport</keyword>
<comment type="function">
    <text>Produces ATP from ADP in the presence of a proton gradient across the membrane. The alpha chain is a regulatory subunit.</text>
</comment>
<comment type="catalytic activity">
    <reaction evidence="1">
        <text>ATP + H2O + 4 H(+)(in) = ADP + phosphate + 5 H(+)(out)</text>
        <dbReference type="Rhea" id="RHEA:57720"/>
        <dbReference type="ChEBI" id="CHEBI:15377"/>
        <dbReference type="ChEBI" id="CHEBI:15378"/>
        <dbReference type="ChEBI" id="CHEBI:30616"/>
        <dbReference type="ChEBI" id="CHEBI:43474"/>
        <dbReference type="ChEBI" id="CHEBI:456216"/>
        <dbReference type="EC" id="7.1.2.2"/>
    </reaction>
</comment>
<comment type="subunit">
    <text evidence="1">F-type ATPases have 2 components, CF(1) - the catalytic core - and CF(0) - the membrane proton channel. CF(1) has five subunits: alpha(3), beta(3), gamma(1), delta(1), epsilon(1). CF(0) has four main subunits: a, b, b' and c.</text>
</comment>
<comment type="subcellular location">
    <subcellularLocation>
        <location evidence="1">Plastid</location>
        <location evidence="1">Chloroplast thylakoid membrane</location>
        <topology evidence="1">Peripheral membrane protein</topology>
    </subcellularLocation>
</comment>
<comment type="similarity">
    <text evidence="1">Belongs to the ATPase alpha/beta chains family.</text>
</comment>
<reference key="1">
    <citation type="journal article" date="1992" name="J. Mol. Biol.">
        <title>Chloroplast ATPase genes in the diatom Odontella sinensis reflect cyanobacterial characters in structure and arrangement.</title>
        <authorList>
            <person name="Pancic P.G."/>
            <person name="Strotmann H."/>
            <person name="Kowallik K.V."/>
        </authorList>
    </citation>
    <scope>NUCLEOTIDE SEQUENCE [GENOMIC DNA]</scope>
</reference>
<reference key="2">
    <citation type="journal article" date="1995" name="Plant Mol. Biol. Rep.">
        <title>The chloroplast genome of a chlorophyll a+c-containing alga, Odontella sinensis.</title>
        <authorList>
            <person name="Kowallik K.V."/>
            <person name="Stoebe B."/>
            <person name="Schaffran I."/>
            <person name="Kroth-Pancic P."/>
            <person name="Freier U."/>
        </authorList>
    </citation>
    <scope>NUCLEOTIDE SEQUENCE [LARGE SCALE GENOMIC DNA]</scope>
</reference>
<reference key="3">
    <citation type="journal article" date="1991" name="FEBS Lett.">
        <title>The delta subunit of the chloroplast ATPase is plastid-encoded in the diatom Odontella sinensis.</title>
        <authorList>
            <person name="Pancic P.G."/>
            <person name="Strotmann H."/>
            <person name="Kowallik K.V."/>
        </authorList>
    </citation>
    <scope>NUCLEOTIDE SEQUENCE [GENOMIC DNA] OF 1-39</scope>
</reference>
<protein>
    <recommendedName>
        <fullName evidence="1">ATP synthase subunit alpha, chloroplastic</fullName>
        <ecNumber evidence="1">7.1.2.2</ecNumber>
    </recommendedName>
    <alternativeName>
        <fullName evidence="1">ATP synthase F1 sector subunit alpha</fullName>
    </alternativeName>
    <alternativeName>
        <fullName evidence="1">F-ATPase subunit alpha</fullName>
    </alternativeName>
</protein>
<accession>Q00820</accession>
<proteinExistence type="inferred from homology"/>
<geneLocation type="chloroplast"/>